<sequence length="87" mass="9480">MNSLLMITACLFLIGTVWAKEGYLVNKSTGCKYGCLLLGKNEGCDKECKAKNQGGSYGYCYAFGCWCEGLPESTPTYPLPNKSCSKK</sequence>
<feature type="signal peptide" evidence="2 3">
    <location>
        <begin position="1"/>
        <end position="19"/>
    </location>
</feature>
<feature type="chain" id="PRO_0000035282" description="Beta-toxin Cn5">
    <location>
        <begin position="20"/>
        <end position="85"/>
    </location>
</feature>
<feature type="domain" description="LCN-type CS-alpha/beta" evidence="1">
    <location>
        <begin position="20"/>
        <end position="85"/>
    </location>
</feature>
<feature type="disulfide bond" evidence="1">
    <location>
        <begin position="31"/>
        <end position="84"/>
    </location>
</feature>
<feature type="disulfide bond" evidence="1">
    <location>
        <begin position="35"/>
        <end position="60"/>
    </location>
</feature>
<feature type="disulfide bond" evidence="1">
    <location>
        <begin position="44"/>
        <end position="65"/>
    </location>
</feature>
<feature type="disulfide bond" evidence="1">
    <location>
        <begin position="48"/>
        <end position="67"/>
    </location>
</feature>
<feature type="turn" evidence="5">
    <location>
        <begin position="27"/>
        <end position="29"/>
    </location>
</feature>
<feature type="helix" evidence="5">
    <location>
        <begin position="42"/>
        <end position="48"/>
    </location>
</feature>
<feature type="turn" evidence="5">
    <location>
        <begin position="51"/>
        <end position="53"/>
    </location>
</feature>
<feature type="strand" evidence="5">
    <location>
        <begin position="56"/>
        <end position="61"/>
    </location>
</feature>
<feature type="strand" evidence="5">
    <location>
        <begin position="64"/>
        <end position="68"/>
    </location>
</feature>
<feature type="strand" evidence="5">
    <location>
        <begin position="72"/>
        <end position="74"/>
    </location>
</feature>
<proteinExistence type="evidence at protein level"/>
<organism>
    <name type="scientific">Centruroides noxius</name>
    <name type="common">Mexican scorpion</name>
    <dbReference type="NCBI Taxonomy" id="6878"/>
    <lineage>
        <taxon>Eukaryota</taxon>
        <taxon>Metazoa</taxon>
        <taxon>Ecdysozoa</taxon>
        <taxon>Arthropoda</taxon>
        <taxon>Chelicerata</taxon>
        <taxon>Arachnida</taxon>
        <taxon>Scorpiones</taxon>
        <taxon>Buthida</taxon>
        <taxon>Buthoidea</taxon>
        <taxon>Buthidae</taxon>
        <taxon>Centruroides</taxon>
    </lineage>
</organism>
<name>SCX5_CENNO</name>
<keyword id="KW-0002">3D-structure</keyword>
<keyword id="KW-0165">Cleavage on pair of basic residues</keyword>
<keyword id="KW-0903">Direct protein sequencing</keyword>
<keyword id="KW-1015">Disulfide bond</keyword>
<keyword id="KW-0872">Ion channel impairing toxin</keyword>
<keyword id="KW-0528">Neurotoxin</keyword>
<keyword id="KW-0964">Secreted</keyword>
<keyword id="KW-0732">Signal</keyword>
<keyword id="KW-0800">Toxin</keyword>
<keyword id="KW-0738">Voltage-gated sodium channel impairing toxin</keyword>
<reference key="1">
    <citation type="journal article" date="1993" name="Gene">
        <title>Cloning and characterization of cDNAs that code for Na(+)-channel-blocking toxins of the scorpion Centruroides noxius Hoffmann.</title>
        <authorList>
            <person name="Becerril B."/>
            <person name="Vazquez A."/>
            <person name="Garcia C."/>
            <person name="Corona M."/>
            <person name="Bolivar F."/>
            <person name="Possani L.D."/>
        </authorList>
    </citation>
    <scope>NUCLEOTIDE SEQUENCE [MRNA]</scope>
    <source>
        <tissue>Venom gland</tissue>
    </source>
</reference>
<reference key="2">
    <citation type="journal article" date="1997" name="Comp. Biochem. Physiol.">
        <title>Isolation, characterization and comparison of a novel crustacean toxin with a mammalian toxin from the venom of the scorpion Centruroides noxius Hoffmann.</title>
        <authorList>
            <person name="Garcia C."/>
            <person name="Becerril B."/>
            <person name="Selisko B."/>
            <person name="Delepierre M."/>
            <person name="Possani L.D."/>
        </authorList>
    </citation>
    <scope>PROTEIN SEQUENCE OF 20-85</scope>
    <scope>DISULFIDE BONDS</scope>
    <source>
        <tissue>Venom</tissue>
    </source>
</reference>
<reference key="3">
    <citation type="journal article" date="2009" name="Biochim. Biophys. Acta">
        <title>Solution structure of Cn5, a crustacean toxin found in the venom of the scorpions Centruroides noxius and Centruroides suffusus suffusus.</title>
        <authorList>
            <person name="Corzo G."/>
            <person name="Prochnicka-Chalufour A."/>
            <person name="Garcia B.I."/>
            <person name="Possani L.D."/>
            <person name="Delepierre M."/>
        </authorList>
    </citation>
    <scope>NUCLEOTIDE SEQUENCE [MRNA] OF 20-85</scope>
    <scope>PROTEIN SEQUENCE OF 20-85</scope>
    <scope>STRUCTURE BY NMR OF 20-85</scope>
    <scope>FUNCTION</scope>
    <scope>SUBCELLULAR LOCATION</scope>
    <scope>TISSUE SPECIFICITY</scope>
    <scope>MASS SPECTROMETRY</scope>
    <scope>TOXIC DOSE</scope>
    <scope>DISULFIDE BONDS</scope>
    <source>
        <tissue>Venom</tissue>
        <tissue>Venom gland</tissue>
    </source>
</reference>
<evidence type="ECO:0000255" key="1">
    <source>
        <dbReference type="PROSITE-ProRule" id="PRU01210"/>
    </source>
</evidence>
<evidence type="ECO:0000269" key="2">
    <source>
    </source>
</evidence>
<evidence type="ECO:0000269" key="3">
    <source>
    </source>
</evidence>
<evidence type="ECO:0000305" key="4"/>
<evidence type="ECO:0007829" key="5">
    <source>
        <dbReference type="PDB" id="2KJA"/>
    </source>
</evidence>
<accession>P45663</accession>
<comment type="function">
    <text evidence="2">Beta toxins bind voltage-independently at site-4 of sodium channels (Nav) and shift the voltage of activation toward more negative potentials thereby affecting sodium channel activation and promoting spontaneous and repetitive firing. This toxin is lethal to crustaceans (freshwater crayfish (Cambarellus montezumae spp.)), it provokes a reversible paralysis to insects (crickets (Achaeta spp.)), but is not toxic to mice. At high concentrations, it does displace the (beta) mammal-specific toxin Cn2 from rat brain synaptosomes.</text>
</comment>
<comment type="subcellular location">
    <subcellularLocation>
        <location evidence="2">Secreted</location>
    </subcellularLocation>
</comment>
<comment type="tissue specificity">
    <text evidence="2">Expressed by the venom gland.</text>
</comment>
<comment type="domain">
    <text evidence="4">Has the structural arrangement of an alpha-helix connected to antiparallel beta-sheets by disulfide bonds (CS-alpha/beta).</text>
</comment>
<comment type="mass spectrometry" mass="7136.0" method="Electrospray" evidence="2"/>
<comment type="toxic dose">
    <text evidence="2">LD(50) is 28.5 mg/g body weight of crayfish.</text>
</comment>
<comment type="similarity">
    <text evidence="4">Belongs to the long (4 C-C) scorpion toxin superfamily. Sodium channel inhibitor family. Beta subfamily.</text>
</comment>
<protein>
    <recommendedName>
        <fullName>Beta-toxin Cn5</fullName>
    </recommendedName>
    <alternativeName>
        <fullName>CngtII</fullName>
    </alternativeName>
</protein>
<dbReference type="EMBL" id="L05060">
    <property type="protein sequence ID" value="AAA28285.1"/>
    <property type="molecule type" value="mRNA"/>
</dbReference>
<dbReference type="PIR" id="JN0669">
    <property type="entry name" value="JN0669"/>
</dbReference>
<dbReference type="PDB" id="2KJA">
    <property type="method" value="NMR"/>
    <property type="chains" value="A=20-85"/>
</dbReference>
<dbReference type="PDBsum" id="2KJA"/>
<dbReference type="SMR" id="P45663"/>
<dbReference type="EvolutionaryTrace" id="P45663"/>
<dbReference type="GO" id="GO:0005576">
    <property type="term" value="C:extracellular region"/>
    <property type="evidence" value="ECO:0007669"/>
    <property type="project" value="UniProtKB-SubCell"/>
</dbReference>
<dbReference type="GO" id="GO:0019871">
    <property type="term" value="F:sodium channel inhibitor activity"/>
    <property type="evidence" value="ECO:0007669"/>
    <property type="project" value="InterPro"/>
</dbReference>
<dbReference type="GO" id="GO:0090729">
    <property type="term" value="F:toxin activity"/>
    <property type="evidence" value="ECO:0007669"/>
    <property type="project" value="UniProtKB-KW"/>
</dbReference>
<dbReference type="GO" id="GO:0006952">
    <property type="term" value="P:defense response"/>
    <property type="evidence" value="ECO:0007669"/>
    <property type="project" value="InterPro"/>
</dbReference>
<dbReference type="CDD" id="cd23106">
    <property type="entry name" value="neurotoxins_LC_scorpion"/>
    <property type="match status" value="1"/>
</dbReference>
<dbReference type="FunFam" id="3.30.30.10:FF:000002">
    <property type="entry name" value="Alpha-like toxin BmK-M1"/>
    <property type="match status" value="1"/>
</dbReference>
<dbReference type="Gene3D" id="3.30.30.10">
    <property type="entry name" value="Knottin, scorpion toxin-like"/>
    <property type="match status" value="1"/>
</dbReference>
<dbReference type="InterPro" id="IPR044062">
    <property type="entry name" value="LCN-type_CS_alpha_beta_dom"/>
</dbReference>
<dbReference type="InterPro" id="IPR003614">
    <property type="entry name" value="Scorpion_toxin-like"/>
</dbReference>
<dbReference type="InterPro" id="IPR036574">
    <property type="entry name" value="Scorpion_toxin-like_sf"/>
</dbReference>
<dbReference type="InterPro" id="IPR018218">
    <property type="entry name" value="Scorpion_toxinL"/>
</dbReference>
<dbReference type="InterPro" id="IPR002061">
    <property type="entry name" value="Scorpion_toxinL/defensin"/>
</dbReference>
<dbReference type="Pfam" id="PF00537">
    <property type="entry name" value="Toxin_3"/>
    <property type="match status" value="1"/>
</dbReference>
<dbReference type="PRINTS" id="PR00285">
    <property type="entry name" value="SCORPNTOXIN"/>
</dbReference>
<dbReference type="SMART" id="SM00505">
    <property type="entry name" value="Knot1"/>
    <property type="match status" value="1"/>
</dbReference>
<dbReference type="SUPFAM" id="SSF57095">
    <property type="entry name" value="Scorpion toxin-like"/>
    <property type="match status" value="1"/>
</dbReference>
<dbReference type="PROSITE" id="PS51863">
    <property type="entry name" value="LCN_CSAB"/>
    <property type="match status" value="1"/>
</dbReference>